<gene>
    <name evidence="1" type="primary">ulaG</name>
    <name type="ordered locus">SPA4199</name>
</gene>
<feature type="chain" id="PRO_0000231486" description="Probable L-ascorbate-6-phosphate lactonase UlaG">
    <location>
        <begin position="1"/>
        <end position="354"/>
    </location>
</feature>
<keyword id="KW-0963">Cytoplasm</keyword>
<keyword id="KW-0378">Hydrolase</keyword>
<reference key="1">
    <citation type="journal article" date="2004" name="Nat. Genet.">
        <title>Comparison of genome degradation in Paratyphi A and Typhi, human-restricted serovars of Salmonella enterica that cause typhoid.</title>
        <authorList>
            <person name="McClelland M."/>
            <person name="Sanderson K.E."/>
            <person name="Clifton S.W."/>
            <person name="Latreille P."/>
            <person name="Porwollik S."/>
            <person name="Sabo A."/>
            <person name="Meyer R."/>
            <person name="Bieri T."/>
            <person name="Ozersky P."/>
            <person name="McLellan M."/>
            <person name="Harkins C.R."/>
            <person name="Wang C."/>
            <person name="Nguyen C."/>
            <person name="Berghoff A."/>
            <person name="Elliott G."/>
            <person name="Kohlberg S."/>
            <person name="Strong C."/>
            <person name="Du F."/>
            <person name="Carter J."/>
            <person name="Kremizki C."/>
            <person name="Layman D."/>
            <person name="Leonard S."/>
            <person name="Sun H."/>
            <person name="Fulton L."/>
            <person name="Nash W."/>
            <person name="Miner T."/>
            <person name="Minx P."/>
            <person name="Delehaunty K."/>
            <person name="Fronick C."/>
            <person name="Magrini V."/>
            <person name="Nhan M."/>
            <person name="Warren W."/>
            <person name="Florea L."/>
            <person name="Spieth J."/>
            <person name="Wilson R.K."/>
        </authorList>
    </citation>
    <scope>NUCLEOTIDE SEQUENCE [LARGE SCALE GENOMIC DNA]</scope>
    <source>
        <strain>ATCC 9150 / SARB42</strain>
    </source>
</reference>
<accession>Q5PJ49</accession>
<organism>
    <name type="scientific">Salmonella paratyphi A (strain ATCC 9150 / SARB42)</name>
    <dbReference type="NCBI Taxonomy" id="295319"/>
    <lineage>
        <taxon>Bacteria</taxon>
        <taxon>Pseudomonadati</taxon>
        <taxon>Pseudomonadota</taxon>
        <taxon>Gammaproteobacteria</taxon>
        <taxon>Enterobacterales</taxon>
        <taxon>Enterobacteriaceae</taxon>
        <taxon>Salmonella</taxon>
    </lineage>
</organism>
<name>ULAG_SALPA</name>
<dbReference type="EC" id="3.1.1.-" evidence="1"/>
<dbReference type="EMBL" id="CP000026">
    <property type="protein sequence ID" value="AAV79936.1"/>
    <property type="molecule type" value="Genomic_DNA"/>
</dbReference>
<dbReference type="RefSeq" id="WP_000049161.1">
    <property type="nucleotide sequence ID" value="NC_006511.1"/>
</dbReference>
<dbReference type="SMR" id="Q5PJ49"/>
<dbReference type="GeneID" id="66758606"/>
<dbReference type="KEGG" id="spt:SPA4199"/>
<dbReference type="HOGENOM" id="CLU_074775_0_0_6"/>
<dbReference type="UniPathway" id="UPA00263">
    <property type="reaction ID" value="UER00377"/>
</dbReference>
<dbReference type="Proteomes" id="UP000008185">
    <property type="component" value="Chromosome"/>
</dbReference>
<dbReference type="GO" id="GO:0005737">
    <property type="term" value="C:cytoplasm"/>
    <property type="evidence" value="ECO:0007669"/>
    <property type="project" value="UniProtKB-SubCell"/>
</dbReference>
<dbReference type="GO" id="GO:0035460">
    <property type="term" value="F:L-ascorbate 6-phosphate lactonase activity"/>
    <property type="evidence" value="ECO:0007669"/>
    <property type="project" value="InterPro"/>
</dbReference>
<dbReference type="GO" id="GO:0030145">
    <property type="term" value="F:manganese ion binding"/>
    <property type="evidence" value="ECO:0007669"/>
    <property type="project" value="InterPro"/>
</dbReference>
<dbReference type="GO" id="GO:0019854">
    <property type="term" value="P:L-ascorbic acid catabolic process"/>
    <property type="evidence" value="ECO:0007669"/>
    <property type="project" value="UniProtKB-UniRule"/>
</dbReference>
<dbReference type="CDD" id="cd16284">
    <property type="entry name" value="UlaG-like_MBL-fold"/>
    <property type="match status" value="1"/>
</dbReference>
<dbReference type="FunFam" id="3.60.15.10:FF:000004">
    <property type="entry name" value="Probable L-ascorbate-6-phosphate lactonase UlaG"/>
    <property type="match status" value="1"/>
</dbReference>
<dbReference type="Gene3D" id="3.60.15.10">
    <property type="entry name" value="Ribonuclease Z/Hydroxyacylglutathione hydrolase-like"/>
    <property type="match status" value="1"/>
</dbReference>
<dbReference type="HAMAP" id="MF_01266">
    <property type="entry name" value="UlaG"/>
    <property type="match status" value="1"/>
</dbReference>
<dbReference type="InterPro" id="IPR023951">
    <property type="entry name" value="L-ascorbate_6P_UlaG"/>
</dbReference>
<dbReference type="InterPro" id="IPR001279">
    <property type="entry name" value="Metallo-B-lactamas"/>
</dbReference>
<dbReference type="InterPro" id="IPR036866">
    <property type="entry name" value="RibonucZ/Hydroxyglut_hydro"/>
</dbReference>
<dbReference type="InterPro" id="IPR048021">
    <property type="entry name" value="UlaG-like_MBL-fold"/>
</dbReference>
<dbReference type="InterPro" id="IPR050114">
    <property type="entry name" value="UPF0173_UPF0282_UlaG_hydrolase"/>
</dbReference>
<dbReference type="NCBIfam" id="NF008688">
    <property type="entry name" value="PRK11709.1"/>
    <property type="match status" value="1"/>
</dbReference>
<dbReference type="PANTHER" id="PTHR43546:SF9">
    <property type="entry name" value="L-ASCORBATE-6-PHOSPHATE LACTONASE ULAG-RELATED"/>
    <property type="match status" value="1"/>
</dbReference>
<dbReference type="PANTHER" id="PTHR43546">
    <property type="entry name" value="UPF0173 METAL-DEPENDENT HYDROLASE MJ1163-RELATED"/>
    <property type="match status" value="1"/>
</dbReference>
<dbReference type="Pfam" id="PF12706">
    <property type="entry name" value="Lactamase_B_2"/>
    <property type="match status" value="1"/>
</dbReference>
<dbReference type="SUPFAM" id="SSF56281">
    <property type="entry name" value="Metallo-hydrolase/oxidoreductase"/>
    <property type="match status" value="1"/>
</dbReference>
<proteinExistence type="inferred from homology"/>
<protein>
    <recommendedName>
        <fullName evidence="1">Probable L-ascorbate-6-phosphate lactonase UlaG</fullName>
        <ecNumber evidence="1">3.1.1.-</ecNumber>
    </recommendedName>
    <alternativeName>
        <fullName evidence="1">L-ascorbate utilization protein G</fullName>
    </alternativeName>
</protein>
<comment type="function">
    <text evidence="1">Probably catalyzes the hydrolysis of L-ascorbate-6-P into 3-keto-L-gulonate-6-P. Is essential for L-ascorbate utilization under anaerobic conditions.</text>
</comment>
<comment type="catalytic activity">
    <reaction evidence="1">
        <text>L-ascorbate 6-phosphate + H2O = 3-dehydro-L-gulonate 6-phosphate</text>
        <dbReference type="Rhea" id="RHEA:28803"/>
        <dbReference type="ChEBI" id="CHEBI:15377"/>
        <dbReference type="ChEBI" id="CHEBI:58774"/>
        <dbReference type="ChEBI" id="CHEBI:61698"/>
    </reaction>
</comment>
<comment type="cofactor">
    <cofactor evidence="1">
        <name>a divalent metal cation</name>
        <dbReference type="ChEBI" id="CHEBI:60240"/>
    </cofactor>
</comment>
<comment type="pathway">
    <text evidence="1">Cofactor degradation; L-ascorbate degradation; D-xylulose 5-phosphate from L-ascorbate: step 1/4.</text>
</comment>
<comment type="subcellular location">
    <subcellularLocation>
        <location evidence="1">Cytoplasm</location>
    </subcellularLocation>
</comment>
<comment type="induction">
    <text evidence="1">Induced by L-ascorbate. Repressed by UlaR.</text>
</comment>
<comment type="similarity">
    <text evidence="1">Belongs to the UlaG family.</text>
</comment>
<sequence>MSKVQSITRESWILSTFPEWGSWLNEEIEQEQVAPGTFAMWWLGCTGIWLKSEGGTNVCVDFWCGTGKQSHGNPLMKTGHQMQRMAGVKKLQPNLRTTPFVLDPFAIRQIDAVLATHDHNDHIDVNVAAAVMQNCADDVPFIGPQTCVDLWVGWGVPKERCIVVKPGDVVKVKDIEIHALDAFDRTALITLPADQKAAGVLPDGMDVRAVNYLFKTPGGNLYHSGDSHYSNYYAKHGNEHQIDVALGSYGENPRGITDKMTSADILRMAESLNTKVVIPFHHDIWSNFQADPQEIRVLWEMKKDRLKYGFKPFIWQVGGKFTWPLDKDNFEYHYPRGFDDCFTIEPDLPFKSFL</sequence>
<evidence type="ECO:0000255" key="1">
    <source>
        <dbReference type="HAMAP-Rule" id="MF_01266"/>
    </source>
</evidence>